<protein>
    <recommendedName>
        <fullName evidence="1">Glyceraldehyde-3-phosphate dehydrogenase</fullName>
        <shortName evidence="1">GAPDH</shortName>
        <ecNumber evidence="2">1.2.1.12</ecNumber>
    </recommendedName>
    <alternativeName>
        <fullName evidence="1">NAD-dependent glyceraldehyde-3-phosphate dehydrogenase</fullName>
    </alternativeName>
</protein>
<gene>
    <name type="primary">gap</name>
    <name type="ordered locus">BMD_5038</name>
</gene>
<proteinExistence type="inferred from homology"/>
<dbReference type="EC" id="1.2.1.12" evidence="2"/>
<dbReference type="EMBL" id="X54520">
    <property type="protein sequence ID" value="CAA38376.1"/>
    <property type="molecule type" value="Genomic_DNA"/>
</dbReference>
<dbReference type="EMBL" id="M87647">
    <property type="protein sequence ID" value="AAA73202.1"/>
    <property type="molecule type" value="Genomic_DNA"/>
</dbReference>
<dbReference type="EMBL" id="CP001982">
    <property type="protein sequence ID" value="ADF41838.1"/>
    <property type="molecule type" value="Genomic_DNA"/>
</dbReference>
<dbReference type="PIR" id="S12696">
    <property type="entry name" value="S12696"/>
</dbReference>
<dbReference type="RefSeq" id="WP_013059702.1">
    <property type="nucleotide sequence ID" value="NZ_CP120609.1"/>
</dbReference>
<dbReference type="SMR" id="P23722"/>
<dbReference type="GeneID" id="93645510"/>
<dbReference type="KEGG" id="bmd:BMD_5038"/>
<dbReference type="HOGENOM" id="CLU_030140_0_2_9"/>
<dbReference type="BRENDA" id="1.2.1.12">
    <property type="organism ID" value="656"/>
</dbReference>
<dbReference type="UniPathway" id="UPA00109">
    <property type="reaction ID" value="UER00184"/>
</dbReference>
<dbReference type="Proteomes" id="UP000002365">
    <property type="component" value="Chromosome"/>
</dbReference>
<dbReference type="GO" id="GO:0005737">
    <property type="term" value="C:cytoplasm"/>
    <property type="evidence" value="ECO:0007669"/>
    <property type="project" value="UniProtKB-SubCell"/>
</dbReference>
<dbReference type="GO" id="GO:0004365">
    <property type="term" value="F:glyceraldehyde-3-phosphate dehydrogenase (NAD+) (phosphorylating) activity"/>
    <property type="evidence" value="ECO:0000250"/>
    <property type="project" value="UniProtKB"/>
</dbReference>
<dbReference type="GO" id="GO:0051287">
    <property type="term" value="F:NAD binding"/>
    <property type="evidence" value="ECO:0000250"/>
    <property type="project" value="UniProtKB"/>
</dbReference>
<dbReference type="GO" id="GO:0050661">
    <property type="term" value="F:NADP binding"/>
    <property type="evidence" value="ECO:0007669"/>
    <property type="project" value="InterPro"/>
</dbReference>
<dbReference type="GO" id="GO:0006006">
    <property type="term" value="P:glucose metabolic process"/>
    <property type="evidence" value="ECO:0007669"/>
    <property type="project" value="InterPro"/>
</dbReference>
<dbReference type="GO" id="GO:0006096">
    <property type="term" value="P:glycolytic process"/>
    <property type="evidence" value="ECO:0007669"/>
    <property type="project" value="UniProtKB-UniPathway"/>
</dbReference>
<dbReference type="CDD" id="cd18126">
    <property type="entry name" value="GAPDH_I_C"/>
    <property type="match status" value="1"/>
</dbReference>
<dbReference type="CDD" id="cd05214">
    <property type="entry name" value="GAPDH_I_N"/>
    <property type="match status" value="1"/>
</dbReference>
<dbReference type="FunFam" id="3.30.360.10:FF:000002">
    <property type="entry name" value="Glyceraldehyde-3-phosphate dehydrogenase"/>
    <property type="match status" value="1"/>
</dbReference>
<dbReference type="FunFam" id="3.40.50.720:FF:000001">
    <property type="entry name" value="Glyceraldehyde-3-phosphate dehydrogenase"/>
    <property type="match status" value="1"/>
</dbReference>
<dbReference type="Gene3D" id="3.30.360.10">
    <property type="entry name" value="Dihydrodipicolinate Reductase, domain 2"/>
    <property type="match status" value="1"/>
</dbReference>
<dbReference type="Gene3D" id="3.40.50.720">
    <property type="entry name" value="NAD(P)-binding Rossmann-like Domain"/>
    <property type="match status" value="1"/>
</dbReference>
<dbReference type="InterPro" id="IPR020831">
    <property type="entry name" value="GlycerAld/Erythrose_P_DH"/>
</dbReference>
<dbReference type="InterPro" id="IPR020830">
    <property type="entry name" value="GlycerAld_3-P_DH_AS"/>
</dbReference>
<dbReference type="InterPro" id="IPR020829">
    <property type="entry name" value="GlycerAld_3-P_DH_cat"/>
</dbReference>
<dbReference type="InterPro" id="IPR020828">
    <property type="entry name" value="GlycerAld_3-P_DH_NAD(P)-bd"/>
</dbReference>
<dbReference type="InterPro" id="IPR006424">
    <property type="entry name" value="Glyceraldehyde-3-P_DH_1"/>
</dbReference>
<dbReference type="InterPro" id="IPR036291">
    <property type="entry name" value="NAD(P)-bd_dom_sf"/>
</dbReference>
<dbReference type="NCBIfam" id="TIGR01534">
    <property type="entry name" value="GAPDH-I"/>
    <property type="match status" value="1"/>
</dbReference>
<dbReference type="PANTHER" id="PTHR43148">
    <property type="entry name" value="GLYCERALDEHYDE-3-PHOSPHATE DEHYDROGENASE 2"/>
    <property type="match status" value="1"/>
</dbReference>
<dbReference type="Pfam" id="PF02800">
    <property type="entry name" value="Gp_dh_C"/>
    <property type="match status" value="1"/>
</dbReference>
<dbReference type="Pfam" id="PF00044">
    <property type="entry name" value="Gp_dh_N"/>
    <property type="match status" value="1"/>
</dbReference>
<dbReference type="PIRSF" id="PIRSF000149">
    <property type="entry name" value="GAP_DH"/>
    <property type="match status" value="1"/>
</dbReference>
<dbReference type="PRINTS" id="PR00078">
    <property type="entry name" value="G3PDHDRGNASE"/>
</dbReference>
<dbReference type="SMART" id="SM00846">
    <property type="entry name" value="Gp_dh_N"/>
    <property type="match status" value="1"/>
</dbReference>
<dbReference type="SUPFAM" id="SSF55347">
    <property type="entry name" value="Glyceraldehyde-3-phosphate dehydrogenase-like, C-terminal domain"/>
    <property type="match status" value="1"/>
</dbReference>
<dbReference type="SUPFAM" id="SSF51735">
    <property type="entry name" value="NAD(P)-binding Rossmann-fold domains"/>
    <property type="match status" value="1"/>
</dbReference>
<dbReference type="PROSITE" id="PS00071">
    <property type="entry name" value="GAPDH"/>
    <property type="match status" value="1"/>
</dbReference>
<organism>
    <name type="scientific">Priestia megaterium (strain DSM 319 / IMG 1521)</name>
    <name type="common">Bacillus megaterium</name>
    <dbReference type="NCBI Taxonomy" id="592022"/>
    <lineage>
        <taxon>Bacteria</taxon>
        <taxon>Bacillati</taxon>
        <taxon>Bacillota</taxon>
        <taxon>Bacilli</taxon>
        <taxon>Bacillales</taxon>
        <taxon>Bacillaceae</taxon>
        <taxon>Priestia</taxon>
    </lineage>
</organism>
<evidence type="ECO:0000250" key="1">
    <source>
        <dbReference type="UniProtKB" id="P00362"/>
    </source>
</evidence>
<evidence type="ECO:0000250" key="2">
    <source>
        <dbReference type="UniProtKB" id="P09124"/>
    </source>
</evidence>
<evidence type="ECO:0000250" key="3">
    <source>
        <dbReference type="UniProtKB" id="Q6GIL8"/>
    </source>
</evidence>
<evidence type="ECO:0000305" key="4"/>
<feature type="chain" id="PRO_0000145632" description="Glyceraldehyde-3-phosphate dehydrogenase">
    <location>
        <begin position="1"/>
        <end position="335"/>
    </location>
</feature>
<feature type="active site" description="Nucleophile" evidence="1">
    <location>
        <position position="152"/>
    </location>
</feature>
<feature type="binding site" evidence="1">
    <location>
        <begin position="12"/>
        <end position="13"/>
    </location>
    <ligand>
        <name>NAD(+)</name>
        <dbReference type="ChEBI" id="CHEBI:57540"/>
    </ligand>
</feature>
<feature type="binding site" evidence="1">
    <location>
        <position position="34"/>
    </location>
    <ligand>
        <name>NAD(+)</name>
        <dbReference type="ChEBI" id="CHEBI:57540"/>
    </ligand>
</feature>
<feature type="binding site" evidence="1">
    <location>
        <position position="78"/>
    </location>
    <ligand>
        <name>NAD(+)</name>
        <dbReference type="ChEBI" id="CHEBI:57540"/>
    </ligand>
</feature>
<feature type="binding site" evidence="1">
    <location>
        <position position="120"/>
    </location>
    <ligand>
        <name>NAD(+)</name>
        <dbReference type="ChEBI" id="CHEBI:57540"/>
    </ligand>
</feature>
<feature type="binding site" evidence="1">
    <location>
        <begin position="151"/>
        <end position="153"/>
    </location>
    <ligand>
        <name>D-glyceraldehyde 3-phosphate</name>
        <dbReference type="ChEBI" id="CHEBI:59776"/>
    </ligand>
</feature>
<feature type="binding site" evidence="1">
    <location>
        <position position="182"/>
    </location>
    <ligand>
        <name>D-glyceraldehyde 3-phosphate</name>
        <dbReference type="ChEBI" id="CHEBI:59776"/>
    </ligand>
</feature>
<feature type="binding site" evidence="1">
    <location>
        <position position="183"/>
    </location>
    <ligand>
        <name>NAD(+)</name>
        <dbReference type="ChEBI" id="CHEBI:57540"/>
    </ligand>
</feature>
<feature type="binding site" evidence="1">
    <location>
        <position position="197"/>
    </location>
    <ligand>
        <name>D-glyceraldehyde 3-phosphate</name>
        <dbReference type="ChEBI" id="CHEBI:59776"/>
    </ligand>
</feature>
<feature type="binding site" evidence="1">
    <location>
        <begin position="210"/>
        <end position="211"/>
    </location>
    <ligand>
        <name>D-glyceraldehyde 3-phosphate</name>
        <dbReference type="ChEBI" id="CHEBI:59776"/>
    </ligand>
</feature>
<feature type="binding site" evidence="1">
    <location>
        <position position="233"/>
    </location>
    <ligand>
        <name>D-glyceraldehyde 3-phosphate</name>
        <dbReference type="ChEBI" id="CHEBI:59776"/>
    </ligand>
</feature>
<feature type="binding site" evidence="1">
    <location>
        <position position="315"/>
    </location>
    <ligand>
        <name>NAD(+)</name>
        <dbReference type="ChEBI" id="CHEBI:57540"/>
    </ligand>
</feature>
<feature type="site" description="Activates thiol group during catalysis" evidence="3">
    <location>
        <position position="179"/>
    </location>
</feature>
<keyword id="KW-0963">Cytoplasm</keyword>
<keyword id="KW-0324">Glycolysis</keyword>
<keyword id="KW-0520">NAD</keyword>
<keyword id="KW-0547">Nucleotide-binding</keyword>
<keyword id="KW-0560">Oxidoreductase</keyword>
<comment type="function">
    <text evidence="1">Catalyzes the oxidative phosphorylation of glyceraldehyde 3-phosphate (G3P) to 1,3-bisphosphoglycerate (BPG) using the cofactor NAD. The first reaction step involves the formation of a hemiacetal intermediate between G3P and a cysteine residue, and this hemiacetal intermediate is then oxidized to a thioester, with concomitant reduction of NAD to NADH. The reduced NADH is then exchanged with the second NAD, and the thioester is attacked by a nucleophilic inorganic phosphate to produce BPG.</text>
</comment>
<comment type="catalytic activity">
    <reaction evidence="2">
        <text>D-glyceraldehyde 3-phosphate + phosphate + NAD(+) = (2R)-3-phospho-glyceroyl phosphate + NADH + H(+)</text>
        <dbReference type="Rhea" id="RHEA:10300"/>
        <dbReference type="ChEBI" id="CHEBI:15378"/>
        <dbReference type="ChEBI" id="CHEBI:43474"/>
        <dbReference type="ChEBI" id="CHEBI:57540"/>
        <dbReference type="ChEBI" id="CHEBI:57604"/>
        <dbReference type="ChEBI" id="CHEBI:57945"/>
        <dbReference type="ChEBI" id="CHEBI:59776"/>
        <dbReference type="EC" id="1.2.1.12"/>
    </reaction>
</comment>
<comment type="pathway">
    <text evidence="4">Carbohydrate degradation; glycolysis; pyruvate from D-glyceraldehyde 3-phosphate: step 1/5.</text>
</comment>
<comment type="subunit">
    <text evidence="1">Homotetramer.</text>
</comment>
<comment type="subcellular location">
    <subcellularLocation>
        <location evidence="4">Cytoplasm</location>
    </subcellularLocation>
</comment>
<comment type="similarity">
    <text evidence="4">Belongs to the glyceraldehyde-3-phosphate dehydrogenase family.</text>
</comment>
<accession>P23722</accession>
<accession>D5DNB1</accession>
<name>G3P_PRIM3</name>
<reference key="1">
    <citation type="journal article" date="1990" name="Nucleic Acids Res.">
        <title>Nucleotide sequence of the glyceraldehyde-3-phosphate dehydrogenase from Bacillus megaterium.</title>
        <authorList>
            <person name="Schlaepfer B.S."/>
            <person name="Portmann W."/>
            <person name="Branlant C."/>
            <person name="Branlant G."/>
            <person name="Zuber H."/>
        </authorList>
    </citation>
    <scope>NUCLEOTIDE SEQUENCE [GENOMIC DNA]</scope>
</reference>
<reference key="2">
    <citation type="journal article" date="1992" name="Gene">
        <title>Cloning and sequencing of the genes encoding glyceraldehyde-3-phosphate dehydrogenase, phosphoglycerate kinase and triosephosphate isomerase (gap operon) from mesophilic Bacillus megaterium: comparison with corresponding sequences from thermophilic Bacillus stearothermophilus.</title>
        <authorList>
            <person name="Schlaepfer B.S."/>
            <person name="Zuber H."/>
        </authorList>
    </citation>
    <scope>NUCLEOTIDE SEQUENCE [GENOMIC DNA]</scope>
</reference>
<reference key="3">
    <citation type="journal article" date="2011" name="J. Bacteriol.">
        <title>Genome sequences of the biotechnologically important Bacillus megaterium strains QM B1551 and DSM319.</title>
        <authorList>
            <person name="Eppinger M."/>
            <person name="Bunk B."/>
            <person name="Johns M.A."/>
            <person name="Edirisinghe J.N."/>
            <person name="Kutumbaka K.K."/>
            <person name="Koenig S.S."/>
            <person name="Creasy H.H."/>
            <person name="Rosovitz M.J."/>
            <person name="Riley D.R."/>
            <person name="Daugherty S."/>
            <person name="Martin M."/>
            <person name="Elbourne L.D."/>
            <person name="Paulsen I."/>
            <person name="Biedendieck R."/>
            <person name="Braun C."/>
            <person name="Grayburn S."/>
            <person name="Dhingra S."/>
            <person name="Lukyanchuk V."/>
            <person name="Ball B."/>
            <person name="Ul-Qamar R."/>
            <person name="Seibel J."/>
            <person name="Bremer E."/>
            <person name="Jahn D."/>
            <person name="Ravel J."/>
            <person name="Vary P.S."/>
        </authorList>
    </citation>
    <scope>NUCLEOTIDE SEQUENCE [LARGE SCALE GENOMIC DNA]</scope>
    <source>
        <strain>DSM 319 / IMG 1521</strain>
    </source>
</reference>
<sequence length="335" mass="35905">MAVKIGINGFGRIGRNVFRAALKNDNVEVVAINDLTDANMLAHLLKYDSVHGKLDAEVVVDGSNLVVNGKTIEISAERDPAQLSWGKQGVEIVVESTGFFTKRADAAKHLEAGAKKVIISAPASDEDITIVMGVNEDKYDAANHNVISNASCTTNCLAPFAKVLNDKFGLKRGMMTTVHSYTNDQQILDLPHKDYRRARAAAENIIPTSTGAAKAVSLVLPELKGKLNGGAMRVPTPNVSLVDLVAELDKEVTVEDVNNALKEAAEGDLKGILGYSEEPLVSGDYNGNINSSTIDALSTMVMEGNMVKVISWYDNESGYSNRVVDLAQYIAAKGL</sequence>